<organism>
    <name type="scientific">Pectobacterium carotovorum subsp. carotovorum (strain PC1)</name>
    <dbReference type="NCBI Taxonomy" id="561230"/>
    <lineage>
        <taxon>Bacteria</taxon>
        <taxon>Pseudomonadati</taxon>
        <taxon>Pseudomonadota</taxon>
        <taxon>Gammaproteobacteria</taxon>
        <taxon>Enterobacterales</taxon>
        <taxon>Pectobacteriaceae</taxon>
        <taxon>Pectobacterium</taxon>
    </lineage>
</organism>
<dbReference type="EMBL" id="CP001657">
    <property type="protein sequence ID" value="ACT11785.1"/>
    <property type="molecule type" value="Genomic_DNA"/>
</dbReference>
<dbReference type="RefSeq" id="WP_012773428.1">
    <property type="nucleotide sequence ID" value="NC_012917.1"/>
</dbReference>
<dbReference type="SMR" id="C6D9J9"/>
<dbReference type="STRING" id="561230.PC1_0731"/>
<dbReference type="KEGG" id="pct:PC1_0731"/>
<dbReference type="eggNOG" id="COG1914">
    <property type="taxonomic scope" value="Bacteria"/>
</dbReference>
<dbReference type="HOGENOM" id="CLU_020088_2_0_6"/>
<dbReference type="OrthoDB" id="9787548at2"/>
<dbReference type="Proteomes" id="UP000002736">
    <property type="component" value="Chromosome"/>
</dbReference>
<dbReference type="GO" id="GO:0005886">
    <property type="term" value="C:plasma membrane"/>
    <property type="evidence" value="ECO:0007669"/>
    <property type="project" value="UniProtKB-SubCell"/>
</dbReference>
<dbReference type="GO" id="GO:0015086">
    <property type="term" value="F:cadmium ion transmembrane transporter activity"/>
    <property type="evidence" value="ECO:0007669"/>
    <property type="project" value="TreeGrafter"/>
</dbReference>
<dbReference type="GO" id="GO:0005384">
    <property type="term" value="F:manganese ion transmembrane transporter activity"/>
    <property type="evidence" value="ECO:0007669"/>
    <property type="project" value="TreeGrafter"/>
</dbReference>
<dbReference type="GO" id="GO:0046872">
    <property type="term" value="F:metal ion binding"/>
    <property type="evidence" value="ECO:0007669"/>
    <property type="project" value="UniProtKB-UniRule"/>
</dbReference>
<dbReference type="GO" id="GO:0015293">
    <property type="term" value="F:symporter activity"/>
    <property type="evidence" value="ECO:0007669"/>
    <property type="project" value="UniProtKB-UniRule"/>
</dbReference>
<dbReference type="GO" id="GO:0034755">
    <property type="term" value="P:iron ion transmembrane transport"/>
    <property type="evidence" value="ECO:0007669"/>
    <property type="project" value="TreeGrafter"/>
</dbReference>
<dbReference type="HAMAP" id="MF_00221">
    <property type="entry name" value="NRAMP"/>
    <property type="match status" value="1"/>
</dbReference>
<dbReference type="InterPro" id="IPR001046">
    <property type="entry name" value="NRAMP_fam"/>
</dbReference>
<dbReference type="NCBIfam" id="TIGR01197">
    <property type="entry name" value="nramp"/>
    <property type="match status" value="1"/>
</dbReference>
<dbReference type="NCBIfam" id="NF037982">
    <property type="entry name" value="Nramp_1"/>
    <property type="match status" value="1"/>
</dbReference>
<dbReference type="NCBIfam" id="NF001923">
    <property type="entry name" value="PRK00701.1"/>
    <property type="match status" value="1"/>
</dbReference>
<dbReference type="PANTHER" id="PTHR11706:SF33">
    <property type="entry name" value="NATURAL RESISTANCE-ASSOCIATED MACROPHAGE PROTEIN 2"/>
    <property type="match status" value="1"/>
</dbReference>
<dbReference type="PANTHER" id="PTHR11706">
    <property type="entry name" value="SOLUTE CARRIER PROTEIN FAMILY 11 MEMBER"/>
    <property type="match status" value="1"/>
</dbReference>
<dbReference type="Pfam" id="PF01566">
    <property type="entry name" value="Nramp"/>
    <property type="match status" value="1"/>
</dbReference>
<dbReference type="PRINTS" id="PR00447">
    <property type="entry name" value="NATRESASSCMP"/>
</dbReference>
<keyword id="KW-0997">Cell inner membrane</keyword>
<keyword id="KW-1003">Cell membrane</keyword>
<keyword id="KW-0406">Ion transport</keyword>
<keyword id="KW-0472">Membrane</keyword>
<keyword id="KW-0769">Symport</keyword>
<keyword id="KW-0812">Transmembrane</keyword>
<keyword id="KW-1133">Transmembrane helix</keyword>
<keyword id="KW-0813">Transport</keyword>
<proteinExistence type="inferred from homology"/>
<accession>C6D9J9</accession>
<protein>
    <recommendedName>
        <fullName evidence="1">Divalent metal cation transporter MntH</fullName>
    </recommendedName>
</protein>
<reference key="1">
    <citation type="submission" date="2009-07" db="EMBL/GenBank/DDBJ databases">
        <title>Complete sequence of Pectobacterium carotovorum subsp. carotovorum PC1.</title>
        <authorList>
            <consortium name="US DOE Joint Genome Institute"/>
            <person name="Lucas S."/>
            <person name="Copeland A."/>
            <person name="Lapidus A."/>
            <person name="Glavina del Rio T."/>
            <person name="Tice H."/>
            <person name="Bruce D."/>
            <person name="Goodwin L."/>
            <person name="Pitluck S."/>
            <person name="Munk A.C."/>
            <person name="Brettin T."/>
            <person name="Detter J.C."/>
            <person name="Han C."/>
            <person name="Tapia R."/>
            <person name="Larimer F."/>
            <person name="Land M."/>
            <person name="Hauser L."/>
            <person name="Kyrpides N."/>
            <person name="Mikhailova N."/>
            <person name="Balakrishnan V."/>
            <person name="Glasner J."/>
            <person name="Perna N.T."/>
        </authorList>
    </citation>
    <scope>NUCLEOTIDE SEQUENCE [LARGE SCALE GENOMIC DNA]</scope>
    <source>
        <strain>PC1</strain>
    </source>
</reference>
<feature type="chain" id="PRO_1000204257" description="Divalent metal cation transporter MntH">
    <location>
        <begin position="1"/>
        <end position="412"/>
    </location>
</feature>
<feature type="transmembrane region" description="Helical" evidence="1">
    <location>
        <begin position="19"/>
        <end position="39"/>
    </location>
</feature>
<feature type="transmembrane region" description="Helical" evidence="1">
    <location>
        <begin position="46"/>
        <end position="66"/>
    </location>
</feature>
<feature type="transmembrane region" description="Helical" evidence="1">
    <location>
        <begin position="98"/>
        <end position="118"/>
    </location>
</feature>
<feature type="transmembrane region" description="Helical" evidence="1">
    <location>
        <begin position="122"/>
        <end position="142"/>
    </location>
</feature>
<feature type="transmembrane region" description="Helical" evidence="1">
    <location>
        <begin position="155"/>
        <end position="175"/>
    </location>
</feature>
<feature type="transmembrane region" description="Helical" evidence="1">
    <location>
        <begin position="196"/>
        <end position="216"/>
    </location>
</feature>
<feature type="transmembrane region" description="Helical" evidence="1">
    <location>
        <begin position="241"/>
        <end position="261"/>
    </location>
</feature>
<feature type="transmembrane region" description="Helical" evidence="1">
    <location>
        <begin position="286"/>
        <end position="306"/>
    </location>
</feature>
<feature type="transmembrane region" description="Helical" evidence="1">
    <location>
        <begin position="348"/>
        <end position="368"/>
    </location>
</feature>
<feature type="transmembrane region" description="Helical" evidence="1">
    <location>
        <begin position="392"/>
        <end position="412"/>
    </location>
</feature>
<evidence type="ECO:0000255" key="1">
    <source>
        <dbReference type="HAMAP-Rule" id="MF_00221"/>
    </source>
</evidence>
<sequence length="412" mass="43941">MPGSRVIESTSRTSRKVKLSLMGPAFIAAIGYIDPGNFATNIQSGAAYGYTLLWVVVWANLMAMLIQLLSAKLGIATGKNLAEHIRDRFPRPAVWAYWVQAEIIAMATDLAEFIGAAIGFKLLLGVSLLEGAILTAIATFLILMLQQRGQKPLEMVIGGLLLFVAAAYIVELVFSQPELSALAKGMAMPSLPTSDAVLLAAGVLGATIMPHVIYLHSSLTQHEGSHTRAERYSATKVDVAIAMTIAGFVNLAMMATAAAAFHFSGNQDIADLDKAYLTLEPLLGKAAAVIFGLSLVAAGLSSTVVGTLAGQVVMQGFVRFHIPLWVRRSVTMLPSFIVILSGMDPTRVLVLSQVVLSFGIALALVPLLSFTGNRELMGTMVNGKWVQRIGQLIVVLVVSLNMYLLIDTMSGI</sequence>
<gene>
    <name evidence="1" type="primary">mntH</name>
    <name type="ordered locus">PC1_0731</name>
</gene>
<name>MNTH_PECCP</name>
<comment type="function">
    <text evidence="1">H(+)-stimulated, divalent metal cation uptake system.</text>
</comment>
<comment type="subcellular location">
    <subcellularLocation>
        <location evidence="1">Cell inner membrane</location>
        <topology evidence="1">Multi-pass membrane protein</topology>
    </subcellularLocation>
</comment>
<comment type="similarity">
    <text evidence="1">Belongs to the NRAMP family.</text>
</comment>